<name>TSAD_NEIMF</name>
<protein>
    <recommendedName>
        <fullName evidence="1">tRNA N6-adenosine threonylcarbamoyltransferase</fullName>
        <ecNumber evidence="1">2.3.1.234</ecNumber>
    </recommendedName>
    <alternativeName>
        <fullName evidence="1">N6-L-threonylcarbamoyladenine synthase</fullName>
        <shortName evidence="1">t(6)A synthase</shortName>
    </alternativeName>
    <alternativeName>
        <fullName evidence="1">t(6)A37 threonylcarbamoyladenosine biosynthesis protein TsaD</fullName>
    </alternativeName>
    <alternativeName>
        <fullName evidence="1">tRNA threonylcarbamoyladenosine biosynthesis protein TsaD</fullName>
    </alternativeName>
</protein>
<feature type="chain" id="PRO_0000303451" description="tRNA N6-adenosine threonylcarbamoyltransferase">
    <location>
        <begin position="1"/>
        <end position="354"/>
    </location>
</feature>
<feature type="binding site" evidence="1">
    <location>
        <position position="111"/>
    </location>
    <ligand>
        <name>Fe cation</name>
        <dbReference type="ChEBI" id="CHEBI:24875"/>
    </ligand>
</feature>
<feature type="binding site" evidence="1">
    <location>
        <position position="115"/>
    </location>
    <ligand>
        <name>Fe cation</name>
        <dbReference type="ChEBI" id="CHEBI:24875"/>
    </ligand>
</feature>
<feature type="binding site" evidence="1">
    <location>
        <begin position="134"/>
        <end position="138"/>
    </location>
    <ligand>
        <name>substrate</name>
    </ligand>
</feature>
<feature type="binding site" evidence="1">
    <location>
        <position position="167"/>
    </location>
    <ligand>
        <name>substrate</name>
    </ligand>
</feature>
<feature type="binding site" evidence="1">
    <location>
        <position position="180"/>
    </location>
    <ligand>
        <name>substrate</name>
    </ligand>
</feature>
<feature type="binding site" evidence="1">
    <location>
        <position position="279"/>
    </location>
    <ligand>
        <name>substrate</name>
    </ligand>
</feature>
<feature type="binding site" evidence="1">
    <location>
        <position position="319"/>
    </location>
    <ligand>
        <name>Fe cation</name>
        <dbReference type="ChEBI" id="CHEBI:24875"/>
    </ligand>
</feature>
<evidence type="ECO:0000255" key="1">
    <source>
        <dbReference type="HAMAP-Rule" id="MF_01445"/>
    </source>
</evidence>
<dbReference type="EC" id="2.3.1.234" evidence="1"/>
<dbReference type="EMBL" id="AM421808">
    <property type="protein sequence ID" value="CAM09726.1"/>
    <property type="molecule type" value="Genomic_DNA"/>
</dbReference>
<dbReference type="RefSeq" id="WP_002221472.1">
    <property type="nucleotide sequence ID" value="NC_008767.1"/>
</dbReference>
<dbReference type="SMR" id="A1KS96"/>
<dbReference type="KEGG" id="nmc:NMC0419"/>
<dbReference type="HOGENOM" id="CLU_023208_0_0_4"/>
<dbReference type="Proteomes" id="UP000002286">
    <property type="component" value="Chromosome"/>
</dbReference>
<dbReference type="GO" id="GO:0005737">
    <property type="term" value="C:cytoplasm"/>
    <property type="evidence" value="ECO:0007669"/>
    <property type="project" value="UniProtKB-SubCell"/>
</dbReference>
<dbReference type="GO" id="GO:0005506">
    <property type="term" value="F:iron ion binding"/>
    <property type="evidence" value="ECO:0007669"/>
    <property type="project" value="UniProtKB-UniRule"/>
</dbReference>
<dbReference type="GO" id="GO:0061711">
    <property type="term" value="F:N(6)-L-threonylcarbamoyladenine synthase activity"/>
    <property type="evidence" value="ECO:0007669"/>
    <property type="project" value="UniProtKB-EC"/>
</dbReference>
<dbReference type="GO" id="GO:0002949">
    <property type="term" value="P:tRNA threonylcarbamoyladenosine modification"/>
    <property type="evidence" value="ECO:0007669"/>
    <property type="project" value="UniProtKB-UniRule"/>
</dbReference>
<dbReference type="CDD" id="cd24133">
    <property type="entry name" value="ASKHA_NBD_TsaD_bac"/>
    <property type="match status" value="1"/>
</dbReference>
<dbReference type="FunFam" id="3.30.420.40:FF:000040">
    <property type="entry name" value="tRNA N6-adenosine threonylcarbamoyltransferase"/>
    <property type="match status" value="1"/>
</dbReference>
<dbReference type="Gene3D" id="3.30.420.40">
    <property type="match status" value="2"/>
</dbReference>
<dbReference type="HAMAP" id="MF_01445">
    <property type="entry name" value="TsaD"/>
    <property type="match status" value="1"/>
</dbReference>
<dbReference type="InterPro" id="IPR043129">
    <property type="entry name" value="ATPase_NBD"/>
</dbReference>
<dbReference type="InterPro" id="IPR000905">
    <property type="entry name" value="Gcp-like_dom"/>
</dbReference>
<dbReference type="InterPro" id="IPR017861">
    <property type="entry name" value="KAE1/TsaD"/>
</dbReference>
<dbReference type="InterPro" id="IPR022450">
    <property type="entry name" value="TsaD"/>
</dbReference>
<dbReference type="NCBIfam" id="TIGR00329">
    <property type="entry name" value="gcp_kae1"/>
    <property type="match status" value="1"/>
</dbReference>
<dbReference type="NCBIfam" id="TIGR03723">
    <property type="entry name" value="T6A_TsaD_YgjD"/>
    <property type="match status" value="1"/>
</dbReference>
<dbReference type="PANTHER" id="PTHR11735">
    <property type="entry name" value="TRNA N6-ADENOSINE THREONYLCARBAMOYLTRANSFERASE"/>
    <property type="match status" value="1"/>
</dbReference>
<dbReference type="PANTHER" id="PTHR11735:SF6">
    <property type="entry name" value="TRNA N6-ADENOSINE THREONYLCARBAMOYLTRANSFERASE, MITOCHONDRIAL"/>
    <property type="match status" value="1"/>
</dbReference>
<dbReference type="Pfam" id="PF00814">
    <property type="entry name" value="TsaD"/>
    <property type="match status" value="1"/>
</dbReference>
<dbReference type="PRINTS" id="PR00789">
    <property type="entry name" value="OSIALOPTASE"/>
</dbReference>
<dbReference type="SUPFAM" id="SSF53067">
    <property type="entry name" value="Actin-like ATPase domain"/>
    <property type="match status" value="2"/>
</dbReference>
<sequence length="354" mass="37552">MLVLGIESSCDETGVALYDTERGLRAHCLHTQMAMHAEYGGVVPELASRDHIRRLVPLTEGCLAQAGASYGDIDAVAFTQGPGLGGALLAGSSYANALAFALDKPVIPVHHLEGHLLSPLLAEEKPDFPFVALLVSGGHTQIMAVRGIGDYALLGESVDDAAGEAFDKTAKLLGLPYPGGAKLSELAESGRPEAFVFPRPMIHSDDLQMSFSGLKTAVLTAVEKVRAENGADDIPEQTRNDICRAFQDAVVDVLAAKVKKALLQTGFRTVVVAGGVGANRKLRETFGNMTVQIPTPKGKPKHPSEKVSVFFPPTAYCTDNGAMIAFAGAMHLKTGREAGAFNVRPRWPLSEIVK</sequence>
<accession>A1KS96</accession>
<comment type="function">
    <text evidence="1">Required for the formation of a threonylcarbamoyl group on adenosine at position 37 (t(6)A37) in tRNAs that read codons beginning with adenine. Is involved in the transfer of the threonylcarbamoyl moiety of threonylcarbamoyl-AMP (TC-AMP) to the N6 group of A37, together with TsaE and TsaB. TsaD likely plays a direct catalytic role in this reaction.</text>
</comment>
<comment type="catalytic activity">
    <reaction evidence="1">
        <text>L-threonylcarbamoyladenylate + adenosine(37) in tRNA = N(6)-L-threonylcarbamoyladenosine(37) in tRNA + AMP + H(+)</text>
        <dbReference type="Rhea" id="RHEA:37059"/>
        <dbReference type="Rhea" id="RHEA-COMP:10162"/>
        <dbReference type="Rhea" id="RHEA-COMP:10163"/>
        <dbReference type="ChEBI" id="CHEBI:15378"/>
        <dbReference type="ChEBI" id="CHEBI:73682"/>
        <dbReference type="ChEBI" id="CHEBI:74411"/>
        <dbReference type="ChEBI" id="CHEBI:74418"/>
        <dbReference type="ChEBI" id="CHEBI:456215"/>
        <dbReference type="EC" id="2.3.1.234"/>
    </reaction>
</comment>
<comment type="cofactor">
    <cofactor evidence="1">
        <name>Fe(2+)</name>
        <dbReference type="ChEBI" id="CHEBI:29033"/>
    </cofactor>
    <text evidence="1">Binds 1 Fe(2+) ion per subunit.</text>
</comment>
<comment type="subcellular location">
    <subcellularLocation>
        <location evidence="1">Cytoplasm</location>
    </subcellularLocation>
</comment>
<comment type="similarity">
    <text evidence="1">Belongs to the KAE1 / TsaD family.</text>
</comment>
<proteinExistence type="inferred from homology"/>
<organism>
    <name type="scientific">Neisseria meningitidis serogroup C / serotype 2a (strain ATCC 700532 / DSM 15464 / FAM18)</name>
    <dbReference type="NCBI Taxonomy" id="272831"/>
    <lineage>
        <taxon>Bacteria</taxon>
        <taxon>Pseudomonadati</taxon>
        <taxon>Pseudomonadota</taxon>
        <taxon>Betaproteobacteria</taxon>
        <taxon>Neisseriales</taxon>
        <taxon>Neisseriaceae</taxon>
        <taxon>Neisseria</taxon>
    </lineage>
</organism>
<reference key="1">
    <citation type="journal article" date="2007" name="PLoS Genet.">
        <title>Meningococcal genetic variation mechanisms viewed through comparative analysis of serogroup C strain FAM18.</title>
        <authorList>
            <person name="Bentley S.D."/>
            <person name="Vernikos G.S."/>
            <person name="Snyder L.A.S."/>
            <person name="Churcher C."/>
            <person name="Arrowsmith C."/>
            <person name="Chillingworth T."/>
            <person name="Cronin A."/>
            <person name="Davis P.H."/>
            <person name="Holroyd N.E."/>
            <person name="Jagels K."/>
            <person name="Maddison M."/>
            <person name="Moule S."/>
            <person name="Rabbinowitsch E."/>
            <person name="Sharp S."/>
            <person name="Unwin L."/>
            <person name="Whitehead S."/>
            <person name="Quail M.A."/>
            <person name="Achtman M."/>
            <person name="Barrell B.G."/>
            <person name="Saunders N.J."/>
            <person name="Parkhill J."/>
        </authorList>
    </citation>
    <scope>NUCLEOTIDE SEQUENCE [LARGE SCALE GENOMIC DNA]</scope>
    <source>
        <strain>ATCC 700532 / DSM 15464 / FAM18</strain>
    </source>
</reference>
<keyword id="KW-0012">Acyltransferase</keyword>
<keyword id="KW-0963">Cytoplasm</keyword>
<keyword id="KW-0408">Iron</keyword>
<keyword id="KW-0479">Metal-binding</keyword>
<keyword id="KW-0808">Transferase</keyword>
<keyword id="KW-0819">tRNA processing</keyword>
<gene>
    <name evidence="1" type="primary">tsaD</name>
    <name type="synonym">gcp</name>
    <name type="ordered locus">NMC0419</name>
</gene>